<organism>
    <name type="scientific">Pseudomonas syringae pv. syringae (strain B728a)</name>
    <dbReference type="NCBI Taxonomy" id="205918"/>
    <lineage>
        <taxon>Bacteria</taxon>
        <taxon>Pseudomonadati</taxon>
        <taxon>Pseudomonadota</taxon>
        <taxon>Gammaproteobacteria</taxon>
        <taxon>Pseudomonadales</taxon>
        <taxon>Pseudomonadaceae</taxon>
        <taxon>Pseudomonas</taxon>
        <taxon>Pseudomonas syringae</taxon>
    </lineage>
</organism>
<proteinExistence type="inferred from homology"/>
<name>RLMG_PSEU2</name>
<sequence>MPLLISPFAELDLIRQPEQQDEPLQAFDAADEYLLNHVAQAGLSLPSRVLVLNDSFGALAASLAPHATVISSTDSFLAAQALEKNLARNGMSYDAVPHIPASEALQGPFDWVLIRVPKTLALLEEQLIRLQGQLAPGARVIAAAMVKHLPRSAGDLLEEYVGPVQASLAVKKARLLFATPQPMEVRTSPYPTRYRLEEPAIELLNHANVFCRDGLDIGTRAFLPHLPKNLGTARVADLGCGNGVLAIASALDNPQAHYTLVDESFMAVKSAAENWRATLGDRDVRVRAGDGLEMQEPDSLDVVLCNPPFHQQQVVGDFLAWRMFLQARAALVTGGALYIVGNRHLGYHTKLSRLFRGVEQVAATPKFVILKARK</sequence>
<dbReference type="EC" id="2.1.1.174" evidence="1"/>
<dbReference type="EMBL" id="CP000075">
    <property type="protein sequence ID" value="AAY39309.1"/>
    <property type="molecule type" value="Genomic_DNA"/>
</dbReference>
<dbReference type="RefSeq" id="WP_011268935.1">
    <property type="nucleotide sequence ID" value="NC_007005.1"/>
</dbReference>
<dbReference type="RefSeq" id="YP_237347.1">
    <property type="nucleotide sequence ID" value="NC_007005.1"/>
</dbReference>
<dbReference type="SMR" id="Q4ZNG3"/>
<dbReference type="STRING" id="205918.Psyr_4279"/>
<dbReference type="KEGG" id="psb:Psyr_4279"/>
<dbReference type="PATRIC" id="fig|205918.7.peg.4415"/>
<dbReference type="eggNOG" id="COG2813">
    <property type="taxonomic scope" value="Bacteria"/>
</dbReference>
<dbReference type="HOGENOM" id="CLU_040288_4_0_6"/>
<dbReference type="OrthoDB" id="29650at2"/>
<dbReference type="Proteomes" id="UP000000426">
    <property type="component" value="Chromosome"/>
</dbReference>
<dbReference type="GO" id="GO:0005737">
    <property type="term" value="C:cytoplasm"/>
    <property type="evidence" value="ECO:0007669"/>
    <property type="project" value="UniProtKB-SubCell"/>
</dbReference>
<dbReference type="GO" id="GO:0052916">
    <property type="term" value="F:23S rRNA (guanine(1835)-N(2))-methyltransferase activity"/>
    <property type="evidence" value="ECO:0007669"/>
    <property type="project" value="UniProtKB-EC"/>
</dbReference>
<dbReference type="GO" id="GO:0003676">
    <property type="term" value="F:nucleic acid binding"/>
    <property type="evidence" value="ECO:0007669"/>
    <property type="project" value="InterPro"/>
</dbReference>
<dbReference type="CDD" id="cd02440">
    <property type="entry name" value="AdoMet_MTases"/>
    <property type="match status" value="1"/>
</dbReference>
<dbReference type="Gene3D" id="3.40.50.150">
    <property type="entry name" value="Vaccinia Virus protein VP39"/>
    <property type="match status" value="2"/>
</dbReference>
<dbReference type="HAMAP" id="MF_01859">
    <property type="entry name" value="23SrRNA_methyltr_G"/>
    <property type="match status" value="1"/>
</dbReference>
<dbReference type="InterPro" id="IPR002052">
    <property type="entry name" value="DNA_methylase_N6_adenine_CS"/>
</dbReference>
<dbReference type="InterPro" id="IPR017237">
    <property type="entry name" value="rRNA_m2G-MeTrfase_RlmG"/>
</dbReference>
<dbReference type="InterPro" id="IPR046977">
    <property type="entry name" value="RsmC/RlmG"/>
</dbReference>
<dbReference type="InterPro" id="IPR029063">
    <property type="entry name" value="SAM-dependent_MTases_sf"/>
</dbReference>
<dbReference type="InterPro" id="IPR007848">
    <property type="entry name" value="Small_mtfrase_dom"/>
</dbReference>
<dbReference type="PANTHER" id="PTHR47816:SF5">
    <property type="entry name" value="RIBOSOMAL RNA LARGE SUBUNIT METHYLTRANSFERASE G"/>
    <property type="match status" value="1"/>
</dbReference>
<dbReference type="PANTHER" id="PTHR47816">
    <property type="entry name" value="RIBOSOMAL RNA SMALL SUBUNIT METHYLTRANSFERASE C"/>
    <property type="match status" value="1"/>
</dbReference>
<dbReference type="Pfam" id="PF05175">
    <property type="entry name" value="MTS"/>
    <property type="match status" value="1"/>
</dbReference>
<dbReference type="PIRSF" id="PIRSF037565">
    <property type="entry name" value="RRNA_m2G_Mtase_RsmD_prd"/>
    <property type="match status" value="1"/>
</dbReference>
<dbReference type="SUPFAM" id="SSF53335">
    <property type="entry name" value="S-adenosyl-L-methionine-dependent methyltransferases"/>
    <property type="match status" value="2"/>
</dbReference>
<feature type="chain" id="PRO_0000366486" description="Ribosomal RNA large subunit methyltransferase G">
    <location>
        <begin position="1"/>
        <end position="374"/>
    </location>
</feature>
<accession>Q4ZNG3</accession>
<gene>
    <name evidence="1" type="primary">rlmG</name>
    <name type="ordered locus">Psyr_4279</name>
</gene>
<comment type="function">
    <text evidence="1">Specifically methylates the guanine in position 1835 (m2G1835) of 23S rRNA.</text>
</comment>
<comment type="catalytic activity">
    <reaction evidence="1">
        <text>guanosine(1835) in 23S rRNA + S-adenosyl-L-methionine = N(2)-methylguanosine(1835) in 23S rRNA + S-adenosyl-L-homocysteine + H(+)</text>
        <dbReference type="Rhea" id="RHEA:42744"/>
        <dbReference type="Rhea" id="RHEA-COMP:10217"/>
        <dbReference type="Rhea" id="RHEA-COMP:10218"/>
        <dbReference type="ChEBI" id="CHEBI:15378"/>
        <dbReference type="ChEBI" id="CHEBI:57856"/>
        <dbReference type="ChEBI" id="CHEBI:59789"/>
        <dbReference type="ChEBI" id="CHEBI:74269"/>
        <dbReference type="ChEBI" id="CHEBI:74481"/>
        <dbReference type="EC" id="2.1.1.174"/>
    </reaction>
</comment>
<comment type="subcellular location">
    <subcellularLocation>
        <location evidence="1">Cytoplasm</location>
    </subcellularLocation>
</comment>
<comment type="similarity">
    <text evidence="1">Belongs to the methyltransferase superfamily. RlmG family.</text>
</comment>
<keyword id="KW-0963">Cytoplasm</keyword>
<keyword id="KW-0489">Methyltransferase</keyword>
<keyword id="KW-0698">rRNA processing</keyword>
<keyword id="KW-0949">S-adenosyl-L-methionine</keyword>
<keyword id="KW-0808">Transferase</keyword>
<reference key="1">
    <citation type="journal article" date="2005" name="Proc. Natl. Acad. Sci. U.S.A.">
        <title>Comparison of the complete genome sequences of Pseudomonas syringae pv. syringae B728a and pv. tomato DC3000.</title>
        <authorList>
            <person name="Feil H."/>
            <person name="Feil W.S."/>
            <person name="Chain P."/>
            <person name="Larimer F."/>
            <person name="Dibartolo G."/>
            <person name="Copeland A."/>
            <person name="Lykidis A."/>
            <person name="Trong S."/>
            <person name="Nolan M."/>
            <person name="Goltsman E."/>
            <person name="Thiel J."/>
            <person name="Malfatti S."/>
            <person name="Loper J.E."/>
            <person name="Lapidus A."/>
            <person name="Detter J.C."/>
            <person name="Land M."/>
            <person name="Richardson P.M."/>
            <person name="Kyrpides N.C."/>
            <person name="Ivanova N."/>
            <person name="Lindow S.E."/>
        </authorList>
    </citation>
    <scope>NUCLEOTIDE SEQUENCE [LARGE SCALE GENOMIC DNA]</scope>
    <source>
        <strain>B728a</strain>
    </source>
</reference>
<evidence type="ECO:0000255" key="1">
    <source>
        <dbReference type="HAMAP-Rule" id="MF_01859"/>
    </source>
</evidence>
<protein>
    <recommendedName>
        <fullName evidence="1">Ribosomal RNA large subunit methyltransferase G</fullName>
        <ecNumber evidence="1">2.1.1.174</ecNumber>
    </recommendedName>
    <alternativeName>
        <fullName evidence="1">23S rRNA m2G1835 methyltransferase</fullName>
    </alternativeName>
    <alternativeName>
        <fullName evidence="1">rRNA (guanine-N(2)-)-methyltransferase RlmG</fullName>
    </alternativeName>
</protein>